<name>COAW_STAAB</name>
<gene>
    <name evidence="1" type="primary">coaW</name>
    <name type="ordered locus">SAB2014</name>
</gene>
<evidence type="ECO:0000255" key="1">
    <source>
        <dbReference type="HAMAP-Rule" id="MF_01273"/>
    </source>
</evidence>
<reference key="1">
    <citation type="journal article" date="2007" name="PLoS ONE">
        <title>Molecular correlates of host specialization in Staphylococcus aureus.</title>
        <authorList>
            <person name="Herron-Olson L."/>
            <person name="Fitzgerald J.R."/>
            <person name="Musser J.M."/>
            <person name="Kapur V."/>
        </authorList>
    </citation>
    <scope>NUCLEOTIDE SEQUENCE [LARGE SCALE GENOMIC DNA]</scope>
    <source>
        <strain>bovine RF122 / ET3-1</strain>
    </source>
</reference>
<proteinExistence type="inferred from homology"/>
<protein>
    <recommendedName>
        <fullName evidence="1">Type II pantothenate kinase</fullName>
        <ecNumber evidence="1">2.7.1.33</ecNumber>
    </recommendedName>
    <alternativeName>
        <fullName evidence="1">PanK-II</fullName>
    </alternativeName>
    <alternativeName>
        <fullName evidence="1">Pantothenic acid kinase</fullName>
    </alternativeName>
</protein>
<organism>
    <name type="scientific">Staphylococcus aureus (strain bovine RF122 / ET3-1)</name>
    <dbReference type="NCBI Taxonomy" id="273036"/>
    <lineage>
        <taxon>Bacteria</taxon>
        <taxon>Bacillati</taxon>
        <taxon>Bacillota</taxon>
        <taxon>Bacilli</taxon>
        <taxon>Bacillales</taxon>
        <taxon>Staphylococcaceae</taxon>
        <taxon>Staphylococcus</taxon>
    </lineage>
</organism>
<keyword id="KW-0067">ATP-binding</keyword>
<keyword id="KW-0173">Coenzyme A biosynthesis</keyword>
<keyword id="KW-0963">Cytoplasm</keyword>
<keyword id="KW-0418">Kinase</keyword>
<keyword id="KW-0547">Nucleotide-binding</keyword>
<keyword id="KW-0808">Transferase</keyword>
<accession>Q2YUM3</accession>
<feature type="chain" id="PRO_0000261343" description="Type II pantothenate kinase">
    <location>
        <begin position="1"/>
        <end position="267"/>
    </location>
</feature>
<feature type="active site" description="Proton acceptor" evidence="1">
    <location>
        <position position="70"/>
    </location>
</feature>
<feature type="binding site" evidence="1">
    <location>
        <begin position="6"/>
        <end position="13"/>
    </location>
    <ligand>
        <name>ATP</name>
        <dbReference type="ChEBI" id="CHEBI:30616"/>
    </ligand>
</feature>
<feature type="binding site" evidence="1">
    <location>
        <position position="99"/>
    </location>
    <ligand>
        <name>ATP</name>
        <dbReference type="ChEBI" id="CHEBI:30616"/>
    </ligand>
</feature>
<feature type="binding site" evidence="1">
    <location>
        <begin position="121"/>
        <end position="125"/>
    </location>
    <ligand>
        <name>ATP</name>
        <dbReference type="ChEBI" id="CHEBI:30616"/>
    </ligand>
</feature>
<feature type="binding site" evidence="1">
    <location>
        <position position="137"/>
    </location>
    <ligand>
        <name>ATP</name>
        <dbReference type="ChEBI" id="CHEBI:30616"/>
    </ligand>
</feature>
<feature type="binding site" evidence="1">
    <location>
        <position position="225"/>
    </location>
    <ligand>
        <name>ATP</name>
        <dbReference type="ChEBI" id="CHEBI:30616"/>
    </ligand>
</feature>
<sequence>MKVGIDAGGTLIKIIQEQDNQRTFKTELTKNIDQVVEWLNQQQIEKLCLTGGNAGVIAENINIPAQIFVEFDAASQGLGILLKEQGHDLADYIFANVGTGTSLHYFDGQSQRRVGGIGTGGGMIQGLGYLLSQITDYKQLTDMAQHGDRNTIDLKVRHIYKDTEPPIPGDLTAANFGHVLHHLDADFTPSNKLAAVIGVVGEVVTTMAITVAREFKTENIVYIGSSFHNNALLRKVVEDYTVLRGCKPYYVENGAFSGAIGALYLEK</sequence>
<comment type="function">
    <text evidence="1">Catalyzes the phosphorylation of pantothenate (Pan), the first step in CoA biosynthesis.</text>
</comment>
<comment type="catalytic activity">
    <reaction evidence="1">
        <text>(R)-pantothenate + ATP = (R)-4'-phosphopantothenate + ADP + H(+)</text>
        <dbReference type="Rhea" id="RHEA:16373"/>
        <dbReference type="ChEBI" id="CHEBI:10986"/>
        <dbReference type="ChEBI" id="CHEBI:15378"/>
        <dbReference type="ChEBI" id="CHEBI:29032"/>
        <dbReference type="ChEBI" id="CHEBI:30616"/>
        <dbReference type="ChEBI" id="CHEBI:456216"/>
        <dbReference type="EC" id="2.7.1.33"/>
    </reaction>
</comment>
<comment type="pathway">
    <text evidence="1">Cofactor biosynthesis; coenzyme A biosynthesis; CoA from (R)-pantothenate: step 1/5.</text>
</comment>
<comment type="subunit">
    <text evidence="1">Homodimer.</text>
</comment>
<comment type="subcellular location">
    <subcellularLocation>
        <location evidence="1">Cytoplasm</location>
    </subcellularLocation>
</comment>
<comment type="similarity">
    <text evidence="1">Belongs to the type II pantothenate kinase family.</text>
</comment>
<dbReference type="EC" id="2.7.1.33" evidence="1"/>
<dbReference type="EMBL" id="AJ938182">
    <property type="protein sequence ID" value="CAI81703.1"/>
    <property type="molecule type" value="Genomic_DNA"/>
</dbReference>
<dbReference type="RefSeq" id="WP_000862722.1">
    <property type="nucleotide sequence ID" value="NC_007622.1"/>
</dbReference>
<dbReference type="SMR" id="Q2YUM3"/>
<dbReference type="KEGG" id="sab:SAB2014"/>
<dbReference type="HOGENOM" id="CLU_087521_1_0_9"/>
<dbReference type="UniPathway" id="UPA00241">
    <property type="reaction ID" value="UER00352"/>
</dbReference>
<dbReference type="GO" id="GO:0005829">
    <property type="term" value="C:cytosol"/>
    <property type="evidence" value="ECO:0007669"/>
    <property type="project" value="TreeGrafter"/>
</dbReference>
<dbReference type="GO" id="GO:0005524">
    <property type="term" value="F:ATP binding"/>
    <property type="evidence" value="ECO:0007669"/>
    <property type="project" value="UniProtKB-UniRule"/>
</dbReference>
<dbReference type="GO" id="GO:0004594">
    <property type="term" value="F:pantothenate kinase activity"/>
    <property type="evidence" value="ECO:0007669"/>
    <property type="project" value="UniProtKB-UniRule"/>
</dbReference>
<dbReference type="GO" id="GO:0015937">
    <property type="term" value="P:coenzyme A biosynthetic process"/>
    <property type="evidence" value="ECO:0007669"/>
    <property type="project" value="UniProtKB-UniRule"/>
</dbReference>
<dbReference type="Gene3D" id="3.30.420.40">
    <property type="match status" value="1"/>
</dbReference>
<dbReference type="HAMAP" id="MF_01273">
    <property type="entry name" value="Pantothen_kinase_2"/>
    <property type="match status" value="1"/>
</dbReference>
<dbReference type="InterPro" id="IPR043129">
    <property type="entry name" value="ATPase_NBD"/>
</dbReference>
<dbReference type="InterPro" id="IPR004567">
    <property type="entry name" value="Type_II_PanK"/>
</dbReference>
<dbReference type="InterPro" id="IPR011602">
    <property type="entry name" value="Type_II_PanK_bac"/>
</dbReference>
<dbReference type="NCBIfam" id="TIGR00555">
    <property type="entry name" value="panK_eukar"/>
    <property type="match status" value="1"/>
</dbReference>
<dbReference type="NCBIfam" id="NF009842">
    <property type="entry name" value="PRK13317.1"/>
    <property type="match status" value="1"/>
</dbReference>
<dbReference type="PANTHER" id="PTHR12280:SF20">
    <property type="entry name" value="4'-PHOSPHOPANTETHEINE PHOSPHATASE"/>
    <property type="match status" value="1"/>
</dbReference>
<dbReference type="PANTHER" id="PTHR12280">
    <property type="entry name" value="PANTOTHENATE KINASE"/>
    <property type="match status" value="1"/>
</dbReference>
<dbReference type="Pfam" id="PF03630">
    <property type="entry name" value="Fumble"/>
    <property type="match status" value="1"/>
</dbReference>
<dbReference type="PIRSF" id="PIRSF036940">
    <property type="entry name" value="PanK_bac_aCoA"/>
    <property type="match status" value="1"/>
</dbReference>
<dbReference type="SUPFAM" id="SSF53067">
    <property type="entry name" value="Actin-like ATPase domain"/>
    <property type="match status" value="1"/>
</dbReference>